<gene>
    <name evidence="1" type="primary">hprK</name>
    <name type="synonym">ptsK</name>
    <name type="ordered locus">XCC2805</name>
</gene>
<comment type="function">
    <text evidence="1">Catalyzes the ATP- as well as the pyrophosphate-dependent phosphorylation of a specific serine residue in HPr, a phosphocarrier protein of the phosphoenolpyruvate-dependent sugar phosphotransferase system (PTS). HprK/P also catalyzes the pyrophosphate-producing, inorganic phosphate-dependent dephosphorylation (phosphorolysis) of seryl-phosphorylated HPr (P-Ser-HPr).</text>
</comment>
<comment type="catalytic activity">
    <reaction evidence="1">
        <text>[HPr protein]-L-serine + ATP = [HPr protein]-O-phospho-L-serine + ADP + H(+)</text>
        <dbReference type="Rhea" id="RHEA:46600"/>
        <dbReference type="Rhea" id="RHEA-COMP:11602"/>
        <dbReference type="Rhea" id="RHEA-COMP:11603"/>
        <dbReference type="ChEBI" id="CHEBI:15378"/>
        <dbReference type="ChEBI" id="CHEBI:29999"/>
        <dbReference type="ChEBI" id="CHEBI:30616"/>
        <dbReference type="ChEBI" id="CHEBI:83421"/>
        <dbReference type="ChEBI" id="CHEBI:456216"/>
    </reaction>
</comment>
<comment type="catalytic activity">
    <reaction evidence="1">
        <text>[HPr protein]-O-phospho-L-serine + phosphate + H(+) = [HPr protein]-L-serine + diphosphate</text>
        <dbReference type="Rhea" id="RHEA:46604"/>
        <dbReference type="Rhea" id="RHEA-COMP:11602"/>
        <dbReference type="Rhea" id="RHEA-COMP:11603"/>
        <dbReference type="ChEBI" id="CHEBI:15378"/>
        <dbReference type="ChEBI" id="CHEBI:29999"/>
        <dbReference type="ChEBI" id="CHEBI:33019"/>
        <dbReference type="ChEBI" id="CHEBI:43474"/>
        <dbReference type="ChEBI" id="CHEBI:83421"/>
    </reaction>
</comment>
<comment type="cofactor">
    <cofactor evidence="1">
        <name>Mg(2+)</name>
        <dbReference type="ChEBI" id="CHEBI:18420"/>
    </cofactor>
</comment>
<comment type="subunit">
    <text evidence="1">Homohexamer.</text>
</comment>
<comment type="domain">
    <text evidence="1">The Walker A ATP-binding motif also binds Pi and PPi.</text>
</comment>
<comment type="miscellaneous">
    <text evidence="1">Both phosphorylation and phosphorolysis are carried out by the same active site and suggest a common mechanism for both reactions.</text>
</comment>
<comment type="similarity">
    <text evidence="1">Belongs to the HPrK/P family.</text>
</comment>
<evidence type="ECO:0000255" key="1">
    <source>
        <dbReference type="HAMAP-Rule" id="MF_01249"/>
    </source>
</evidence>
<sequence length="316" mass="35154">MNTSITARELFDQQRDKLALRWVAGQKGEHREIQAGSNNARRPSLAGYLNVIYPNKVQILGTEELAWLDSLDARQRWETIEKIIQVQPLALAISKNQSCPEDLRAAADESNTPLWISPKRGHELLNHLSYHLARTLAPRVTLHGVFMEIYSIGVLITGEAGSGKSELALELLSRGHRLVADDAPEFTQIAPDVLDGTCPELLQDLLEVRGLGVLNVRDMFGDTAVKKNKYLRLIVHLTRPMTEPTPSGYERLTGDSGSRHVLDLDVPLITLPVMPGRNLAVLTEAATRLHILRTKGIDPAAMFIARHSNLLERRTP</sequence>
<dbReference type="EC" id="2.7.11.-" evidence="1"/>
<dbReference type="EC" id="2.7.4.-" evidence="1"/>
<dbReference type="EMBL" id="AE008922">
    <property type="protein sequence ID" value="AAM42077.1"/>
    <property type="molecule type" value="Genomic_DNA"/>
</dbReference>
<dbReference type="RefSeq" id="NP_638153.1">
    <property type="nucleotide sequence ID" value="NC_003902.1"/>
</dbReference>
<dbReference type="RefSeq" id="WP_005993219.1">
    <property type="nucleotide sequence ID" value="NC_003902.1"/>
</dbReference>
<dbReference type="SMR" id="Q8P709"/>
<dbReference type="STRING" id="190485.XCC2805"/>
<dbReference type="EnsemblBacteria" id="AAM42077">
    <property type="protein sequence ID" value="AAM42077"/>
    <property type="gene ID" value="XCC2805"/>
</dbReference>
<dbReference type="GeneID" id="97212397"/>
<dbReference type="KEGG" id="xcc:XCC2805"/>
<dbReference type="PATRIC" id="fig|190485.4.peg.2993"/>
<dbReference type="eggNOG" id="COG1493">
    <property type="taxonomic scope" value="Bacteria"/>
</dbReference>
<dbReference type="HOGENOM" id="CLU_052030_0_2_6"/>
<dbReference type="OrthoDB" id="9778803at2"/>
<dbReference type="Proteomes" id="UP000001010">
    <property type="component" value="Chromosome"/>
</dbReference>
<dbReference type="GO" id="GO:0005829">
    <property type="term" value="C:cytosol"/>
    <property type="evidence" value="ECO:0000318"/>
    <property type="project" value="GO_Central"/>
</dbReference>
<dbReference type="GO" id="GO:0005524">
    <property type="term" value="F:ATP binding"/>
    <property type="evidence" value="ECO:0007669"/>
    <property type="project" value="UniProtKB-UniRule"/>
</dbReference>
<dbReference type="GO" id="GO:0000287">
    <property type="term" value="F:magnesium ion binding"/>
    <property type="evidence" value="ECO:0007669"/>
    <property type="project" value="UniProtKB-UniRule"/>
</dbReference>
<dbReference type="GO" id="GO:0000155">
    <property type="term" value="F:phosphorelay sensor kinase activity"/>
    <property type="evidence" value="ECO:0007669"/>
    <property type="project" value="InterPro"/>
</dbReference>
<dbReference type="GO" id="GO:0004674">
    <property type="term" value="F:protein serine/threonine kinase activity"/>
    <property type="evidence" value="ECO:0007669"/>
    <property type="project" value="UniProtKB-KW"/>
</dbReference>
<dbReference type="GO" id="GO:0004712">
    <property type="term" value="F:protein serine/threonine/tyrosine kinase activity"/>
    <property type="evidence" value="ECO:0007669"/>
    <property type="project" value="UniProtKB-UniRule"/>
</dbReference>
<dbReference type="GO" id="GO:0006109">
    <property type="term" value="P:regulation of carbohydrate metabolic process"/>
    <property type="evidence" value="ECO:0007669"/>
    <property type="project" value="UniProtKB-UniRule"/>
</dbReference>
<dbReference type="CDD" id="cd01918">
    <property type="entry name" value="HprK_C"/>
    <property type="match status" value="1"/>
</dbReference>
<dbReference type="FunFam" id="3.40.50.300:FF:000174">
    <property type="entry name" value="HPr kinase/phosphorylase"/>
    <property type="match status" value="1"/>
</dbReference>
<dbReference type="Gene3D" id="3.40.1390.20">
    <property type="entry name" value="HprK N-terminal domain-like"/>
    <property type="match status" value="1"/>
</dbReference>
<dbReference type="Gene3D" id="3.40.50.300">
    <property type="entry name" value="P-loop containing nucleotide triphosphate hydrolases"/>
    <property type="match status" value="1"/>
</dbReference>
<dbReference type="HAMAP" id="MF_01249">
    <property type="entry name" value="HPr_kinase"/>
    <property type="match status" value="1"/>
</dbReference>
<dbReference type="InterPro" id="IPR003755">
    <property type="entry name" value="HPr(Ser)_kin/Pase"/>
</dbReference>
<dbReference type="InterPro" id="IPR011104">
    <property type="entry name" value="Hpr_kin/Pase_C"/>
</dbReference>
<dbReference type="InterPro" id="IPR011126">
    <property type="entry name" value="Hpr_kin/Pase_Hpr_N"/>
</dbReference>
<dbReference type="InterPro" id="IPR027417">
    <property type="entry name" value="P-loop_NTPase"/>
</dbReference>
<dbReference type="InterPro" id="IPR028979">
    <property type="entry name" value="Ser_kin/Pase_Hpr-like_N_sf"/>
</dbReference>
<dbReference type="NCBIfam" id="TIGR00679">
    <property type="entry name" value="hpr-ser"/>
    <property type="match status" value="1"/>
</dbReference>
<dbReference type="PANTHER" id="PTHR30305:SF1">
    <property type="entry name" value="HPR KINASE_PHOSPHORYLASE"/>
    <property type="match status" value="1"/>
</dbReference>
<dbReference type="PANTHER" id="PTHR30305">
    <property type="entry name" value="PROTEIN YJDM-RELATED"/>
    <property type="match status" value="1"/>
</dbReference>
<dbReference type="Pfam" id="PF07475">
    <property type="entry name" value="Hpr_kinase_C"/>
    <property type="match status" value="1"/>
</dbReference>
<dbReference type="Pfam" id="PF02603">
    <property type="entry name" value="Hpr_kinase_N"/>
    <property type="match status" value="1"/>
</dbReference>
<dbReference type="SUPFAM" id="SSF75138">
    <property type="entry name" value="HprK N-terminal domain-like"/>
    <property type="match status" value="1"/>
</dbReference>
<dbReference type="SUPFAM" id="SSF53795">
    <property type="entry name" value="PEP carboxykinase-like"/>
    <property type="match status" value="1"/>
</dbReference>
<name>HPRK_XANCP</name>
<proteinExistence type="inferred from homology"/>
<reference key="1">
    <citation type="journal article" date="2002" name="Nature">
        <title>Comparison of the genomes of two Xanthomonas pathogens with differing host specificities.</title>
        <authorList>
            <person name="da Silva A.C.R."/>
            <person name="Ferro J.A."/>
            <person name="Reinach F.C."/>
            <person name="Farah C.S."/>
            <person name="Furlan L.R."/>
            <person name="Quaggio R.B."/>
            <person name="Monteiro-Vitorello C.B."/>
            <person name="Van Sluys M.A."/>
            <person name="Almeida N.F. Jr."/>
            <person name="Alves L.M.C."/>
            <person name="do Amaral A.M."/>
            <person name="Bertolini M.C."/>
            <person name="Camargo L.E.A."/>
            <person name="Camarotte G."/>
            <person name="Cannavan F."/>
            <person name="Cardozo J."/>
            <person name="Chambergo F."/>
            <person name="Ciapina L.P."/>
            <person name="Cicarelli R.M.B."/>
            <person name="Coutinho L.L."/>
            <person name="Cursino-Santos J.R."/>
            <person name="El-Dorry H."/>
            <person name="Faria J.B."/>
            <person name="Ferreira A.J.S."/>
            <person name="Ferreira R.C.C."/>
            <person name="Ferro M.I.T."/>
            <person name="Formighieri E.F."/>
            <person name="Franco M.C."/>
            <person name="Greggio C.C."/>
            <person name="Gruber A."/>
            <person name="Katsuyama A.M."/>
            <person name="Kishi L.T."/>
            <person name="Leite R.P."/>
            <person name="Lemos E.G.M."/>
            <person name="Lemos M.V.F."/>
            <person name="Locali E.C."/>
            <person name="Machado M.A."/>
            <person name="Madeira A.M.B.N."/>
            <person name="Martinez-Rossi N.M."/>
            <person name="Martins E.C."/>
            <person name="Meidanis J."/>
            <person name="Menck C.F.M."/>
            <person name="Miyaki C.Y."/>
            <person name="Moon D.H."/>
            <person name="Moreira L.M."/>
            <person name="Novo M.T.M."/>
            <person name="Okura V.K."/>
            <person name="Oliveira M.C."/>
            <person name="Oliveira V.R."/>
            <person name="Pereira H.A."/>
            <person name="Rossi A."/>
            <person name="Sena J.A.D."/>
            <person name="Silva C."/>
            <person name="de Souza R.F."/>
            <person name="Spinola L.A.F."/>
            <person name="Takita M.A."/>
            <person name="Tamura R.E."/>
            <person name="Teixeira E.C."/>
            <person name="Tezza R.I.D."/>
            <person name="Trindade dos Santos M."/>
            <person name="Truffi D."/>
            <person name="Tsai S.M."/>
            <person name="White F.F."/>
            <person name="Setubal J.C."/>
            <person name="Kitajima J.P."/>
        </authorList>
    </citation>
    <scope>NUCLEOTIDE SEQUENCE [LARGE SCALE GENOMIC DNA]</scope>
    <source>
        <strain>ATCC 33913 / DSM 3586 / NCPPB 528 / LMG 568 / P 25</strain>
    </source>
</reference>
<protein>
    <recommendedName>
        <fullName evidence="1">HPr kinase/phosphorylase</fullName>
        <shortName evidence="1">HPrK/P</shortName>
        <ecNumber evidence="1">2.7.11.-</ecNumber>
        <ecNumber evidence="1">2.7.4.-</ecNumber>
    </recommendedName>
    <alternativeName>
        <fullName evidence="1">HPr(Ser) kinase/phosphorylase</fullName>
    </alternativeName>
</protein>
<feature type="chain" id="PRO_0000059007" description="HPr kinase/phosphorylase">
    <location>
        <begin position="1"/>
        <end position="316"/>
    </location>
</feature>
<feature type="region of interest" description="Important for the catalytic mechanism of both phosphorylation and dephosphorylation" evidence="1">
    <location>
        <begin position="206"/>
        <end position="215"/>
    </location>
</feature>
<feature type="region of interest" description="Important for the catalytic mechanism of dephosphorylation" evidence="1">
    <location>
        <begin position="272"/>
        <end position="277"/>
    </location>
</feature>
<feature type="active site" evidence="1">
    <location>
        <position position="143"/>
    </location>
</feature>
<feature type="active site" evidence="1">
    <location>
        <position position="164"/>
    </location>
</feature>
<feature type="active site" description="Proton acceptor; for phosphorylation activity. Proton donor; for dephosphorylation activity" evidence="1">
    <location>
        <position position="182"/>
    </location>
</feature>
<feature type="active site" evidence="1">
    <location>
        <position position="251"/>
    </location>
</feature>
<feature type="binding site" evidence="1">
    <location>
        <begin position="158"/>
        <end position="165"/>
    </location>
    <ligand>
        <name>ATP</name>
        <dbReference type="ChEBI" id="CHEBI:30616"/>
    </ligand>
</feature>
<feature type="binding site" evidence="1">
    <location>
        <position position="165"/>
    </location>
    <ligand>
        <name>Mg(2+)</name>
        <dbReference type="ChEBI" id="CHEBI:18420"/>
    </ligand>
</feature>
<feature type="binding site" evidence="1">
    <location>
        <position position="207"/>
    </location>
    <ligand>
        <name>Mg(2+)</name>
        <dbReference type="ChEBI" id="CHEBI:18420"/>
    </ligand>
</feature>
<organism>
    <name type="scientific">Xanthomonas campestris pv. campestris (strain ATCC 33913 / DSM 3586 / NCPPB 528 / LMG 568 / P 25)</name>
    <dbReference type="NCBI Taxonomy" id="190485"/>
    <lineage>
        <taxon>Bacteria</taxon>
        <taxon>Pseudomonadati</taxon>
        <taxon>Pseudomonadota</taxon>
        <taxon>Gammaproteobacteria</taxon>
        <taxon>Lysobacterales</taxon>
        <taxon>Lysobacteraceae</taxon>
        <taxon>Xanthomonas</taxon>
    </lineage>
</organism>
<keyword id="KW-0067">ATP-binding</keyword>
<keyword id="KW-0418">Kinase</keyword>
<keyword id="KW-0460">Magnesium</keyword>
<keyword id="KW-0479">Metal-binding</keyword>
<keyword id="KW-0511">Multifunctional enzyme</keyword>
<keyword id="KW-0547">Nucleotide-binding</keyword>
<keyword id="KW-1185">Reference proteome</keyword>
<keyword id="KW-0723">Serine/threonine-protein kinase</keyword>
<keyword id="KW-0808">Transferase</keyword>
<accession>Q8P709</accession>